<proteinExistence type="inferred from homology"/>
<feature type="chain" id="PRO_0000129323" description="Large ribosomal subunit protein uL4c">
    <location>
        <begin position="1"/>
        <end position="217"/>
    </location>
</feature>
<feature type="region of interest" description="Disordered" evidence="2">
    <location>
        <begin position="51"/>
        <end position="85"/>
    </location>
</feature>
<geneLocation type="chloroplast"/>
<accession>Q6B8V4</accession>
<keyword id="KW-0150">Chloroplast</keyword>
<keyword id="KW-0934">Plastid</keyword>
<keyword id="KW-0687">Ribonucleoprotein</keyword>
<keyword id="KW-0689">Ribosomal protein</keyword>
<keyword id="KW-0694">RNA-binding</keyword>
<keyword id="KW-0699">rRNA-binding</keyword>
<protein>
    <recommendedName>
        <fullName evidence="3">Large ribosomal subunit protein uL4c</fullName>
    </recommendedName>
    <alternativeName>
        <fullName>50S ribosomal protein L4, chloroplastic</fullName>
    </alternativeName>
</protein>
<evidence type="ECO:0000250" key="1"/>
<evidence type="ECO:0000256" key="2">
    <source>
        <dbReference type="SAM" id="MobiDB-lite"/>
    </source>
</evidence>
<evidence type="ECO:0000305" key="3"/>
<comment type="function">
    <text evidence="1">Probably binds the 23S rRNA.</text>
</comment>
<comment type="subunit">
    <text>Part of the 50S ribosomal subunit.</text>
</comment>
<comment type="subcellular location">
    <subcellularLocation>
        <location>Plastid</location>
        <location>Chloroplast</location>
    </subcellularLocation>
</comment>
<comment type="similarity">
    <text evidence="3">Belongs to the universal ribosomal protein uL4 family.</text>
</comment>
<dbReference type="EMBL" id="AY673996">
    <property type="protein sequence ID" value="AAT79681.1"/>
    <property type="molecule type" value="Genomic_DNA"/>
</dbReference>
<dbReference type="RefSeq" id="YP_063606.1">
    <property type="nucleotide sequence ID" value="NC_006137.1"/>
</dbReference>
<dbReference type="SMR" id="Q6B8V4"/>
<dbReference type="GeneID" id="2944087"/>
<dbReference type="GO" id="GO:0009507">
    <property type="term" value="C:chloroplast"/>
    <property type="evidence" value="ECO:0007669"/>
    <property type="project" value="UniProtKB-SubCell"/>
</dbReference>
<dbReference type="GO" id="GO:1990904">
    <property type="term" value="C:ribonucleoprotein complex"/>
    <property type="evidence" value="ECO:0007669"/>
    <property type="project" value="UniProtKB-KW"/>
</dbReference>
<dbReference type="GO" id="GO:0005840">
    <property type="term" value="C:ribosome"/>
    <property type="evidence" value="ECO:0007669"/>
    <property type="project" value="UniProtKB-KW"/>
</dbReference>
<dbReference type="GO" id="GO:0019843">
    <property type="term" value="F:rRNA binding"/>
    <property type="evidence" value="ECO:0007669"/>
    <property type="project" value="UniProtKB-UniRule"/>
</dbReference>
<dbReference type="GO" id="GO:0003735">
    <property type="term" value="F:structural constituent of ribosome"/>
    <property type="evidence" value="ECO:0007669"/>
    <property type="project" value="InterPro"/>
</dbReference>
<dbReference type="GO" id="GO:0006412">
    <property type="term" value="P:translation"/>
    <property type="evidence" value="ECO:0007669"/>
    <property type="project" value="UniProtKB-UniRule"/>
</dbReference>
<dbReference type="Gene3D" id="3.40.1370.10">
    <property type="match status" value="1"/>
</dbReference>
<dbReference type="HAMAP" id="MF_01328_B">
    <property type="entry name" value="Ribosomal_uL4_B"/>
    <property type="match status" value="1"/>
</dbReference>
<dbReference type="InterPro" id="IPR002136">
    <property type="entry name" value="Ribosomal_uL4"/>
</dbReference>
<dbReference type="InterPro" id="IPR013005">
    <property type="entry name" value="Ribosomal_uL4-like"/>
</dbReference>
<dbReference type="InterPro" id="IPR023574">
    <property type="entry name" value="Ribosomal_uL4_dom_sf"/>
</dbReference>
<dbReference type="NCBIfam" id="TIGR03953">
    <property type="entry name" value="rplD_bact"/>
    <property type="match status" value="1"/>
</dbReference>
<dbReference type="PANTHER" id="PTHR10746">
    <property type="entry name" value="50S RIBOSOMAL PROTEIN L4"/>
    <property type="match status" value="1"/>
</dbReference>
<dbReference type="PANTHER" id="PTHR10746:SF17">
    <property type="entry name" value="LARGE RIBOSOMAL SUBUNIT PROTEIN UL4C"/>
    <property type="match status" value="1"/>
</dbReference>
<dbReference type="Pfam" id="PF00573">
    <property type="entry name" value="Ribosomal_L4"/>
    <property type="match status" value="1"/>
</dbReference>
<dbReference type="SUPFAM" id="SSF52166">
    <property type="entry name" value="Ribosomal protein L4"/>
    <property type="match status" value="1"/>
</dbReference>
<reference key="1">
    <citation type="journal article" date="2004" name="J. Mol. Evol.">
        <title>Comparative analysis of the complete plastid genome sequence of the red alga Gracilaria tenuistipitata var. liui provides insights into the evolution of rhodoplasts and their relationship to other plastids.</title>
        <authorList>
            <person name="Hagopian J.C."/>
            <person name="Reis M."/>
            <person name="Kitajima J.P."/>
            <person name="Bhattacharya D."/>
            <person name="de Oliveira M.C."/>
        </authorList>
    </citation>
    <scope>NUCLEOTIDE SEQUENCE [LARGE SCALE GENOMIC DNA]</scope>
</reference>
<gene>
    <name type="primary">rpl4</name>
    <name type="ordered locus">Grc000100</name>
</gene>
<name>RK4_GRATL</name>
<organism>
    <name type="scientific">Gracilaria tenuistipitata var. liui</name>
    <name type="common">Red alga</name>
    <dbReference type="NCBI Taxonomy" id="285951"/>
    <lineage>
        <taxon>Eukaryota</taxon>
        <taxon>Rhodophyta</taxon>
        <taxon>Florideophyceae</taxon>
        <taxon>Rhodymeniophycidae</taxon>
        <taxon>Gracilariales</taxon>
        <taxon>Gracilariaceae</taxon>
        <taxon>Gracilaria</taxon>
        <taxon>Gracilaria tenuistipitata</taxon>
    </lineage>
</organism>
<sequence>MNIKKKLIYSIISSKDTKEKESEEIVVKLSKQSNKKIYILHRALIHQLSNHRNRNAHTQTRGEVSGGGRKPWKQKGTGRARAGSNRSPLWRGGGVIFGPRHKKYVNKINKKEKQLALRILINNKFKNTIVTENFISKISTPNTKILVNNLKKYNLDTNNNILIIVNEKSNDLYLSTRNLKNVELLAANHLNIVSLLKANHIIINKDALDIINKMYND</sequence>